<organism>
    <name type="scientific">Streptococcus suis (strain 98HAH33)</name>
    <dbReference type="NCBI Taxonomy" id="391296"/>
    <lineage>
        <taxon>Bacteria</taxon>
        <taxon>Bacillati</taxon>
        <taxon>Bacillota</taxon>
        <taxon>Bacilli</taxon>
        <taxon>Lactobacillales</taxon>
        <taxon>Streptococcaceae</taxon>
        <taxon>Streptococcus</taxon>
    </lineage>
</organism>
<proteinExistence type="inferred from homology"/>
<protein>
    <recommendedName>
        <fullName evidence="1">Peptidase T</fullName>
        <ecNumber evidence="1">3.4.11.4</ecNumber>
    </recommendedName>
    <alternativeName>
        <fullName evidence="1">Aminotripeptidase</fullName>
        <shortName evidence="1">Tripeptidase</shortName>
    </alternativeName>
    <alternativeName>
        <fullName evidence="1">Tripeptide aminopeptidase</fullName>
    </alternativeName>
</protein>
<comment type="function">
    <text evidence="1">Cleaves the N-terminal amino acid of tripeptides.</text>
</comment>
<comment type="catalytic activity">
    <reaction evidence="1">
        <text>Release of the N-terminal residue from a tripeptide.</text>
        <dbReference type="EC" id="3.4.11.4"/>
    </reaction>
</comment>
<comment type="cofactor">
    <cofactor evidence="1">
        <name>Zn(2+)</name>
        <dbReference type="ChEBI" id="CHEBI:29105"/>
    </cofactor>
    <text evidence="1">Binds 2 Zn(2+) ions per subunit.</text>
</comment>
<comment type="subcellular location">
    <subcellularLocation>
        <location evidence="1">Cytoplasm</location>
    </subcellularLocation>
</comment>
<comment type="similarity">
    <text evidence="1">Belongs to the peptidase M20B family.</text>
</comment>
<evidence type="ECO:0000255" key="1">
    <source>
        <dbReference type="HAMAP-Rule" id="MF_00550"/>
    </source>
</evidence>
<dbReference type="EC" id="3.4.11.4" evidence="1"/>
<dbReference type="EMBL" id="CP000408">
    <property type="protein sequence ID" value="ABP92298.1"/>
    <property type="molecule type" value="Genomic_DNA"/>
</dbReference>
<dbReference type="SMR" id="A4W1Q9"/>
<dbReference type="MEROPS" id="M20.003"/>
<dbReference type="KEGG" id="ssv:SSU98_1140"/>
<dbReference type="HOGENOM" id="CLU_053676_0_0_9"/>
<dbReference type="GO" id="GO:0005829">
    <property type="term" value="C:cytosol"/>
    <property type="evidence" value="ECO:0007669"/>
    <property type="project" value="TreeGrafter"/>
</dbReference>
<dbReference type="GO" id="GO:0008237">
    <property type="term" value="F:metallopeptidase activity"/>
    <property type="evidence" value="ECO:0007669"/>
    <property type="project" value="UniProtKB-KW"/>
</dbReference>
<dbReference type="GO" id="GO:0045148">
    <property type="term" value="F:tripeptide aminopeptidase activity"/>
    <property type="evidence" value="ECO:0007669"/>
    <property type="project" value="UniProtKB-UniRule"/>
</dbReference>
<dbReference type="GO" id="GO:0008270">
    <property type="term" value="F:zinc ion binding"/>
    <property type="evidence" value="ECO:0007669"/>
    <property type="project" value="UniProtKB-UniRule"/>
</dbReference>
<dbReference type="GO" id="GO:0043171">
    <property type="term" value="P:peptide catabolic process"/>
    <property type="evidence" value="ECO:0007669"/>
    <property type="project" value="UniProtKB-UniRule"/>
</dbReference>
<dbReference type="GO" id="GO:0006508">
    <property type="term" value="P:proteolysis"/>
    <property type="evidence" value="ECO:0007669"/>
    <property type="project" value="UniProtKB-UniRule"/>
</dbReference>
<dbReference type="CDD" id="cd03892">
    <property type="entry name" value="M20_peptT"/>
    <property type="match status" value="1"/>
</dbReference>
<dbReference type="FunFam" id="3.30.70.360:FF:000002">
    <property type="entry name" value="Peptidase T"/>
    <property type="match status" value="1"/>
</dbReference>
<dbReference type="Gene3D" id="3.30.70.360">
    <property type="match status" value="1"/>
</dbReference>
<dbReference type="Gene3D" id="3.40.630.10">
    <property type="entry name" value="Zn peptidases"/>
    <property type="match status" value="1"/>
</dbReference>
<dbReference type="HAMAP" id="MF_00550">
    <property type="entry name" value="Aminopeptidase_M20"/>
    <property type="match status" value="1"/>
</dbReference>
<dbReference type="InterPro" id="IPR001261">
    <property type="entry name" value="ArgE/DapE_CS"/>
</dbReference>
<dbReference type="InterPro" id="IPR036264">
    <property type="entry name" value="Bact_exopeptidase_dim_dom"/>
</dbReference>
<dbReference type="InterPro" id="IPR002933">
    <property type="entry name" value="Peptidase_M20"/>
</dbReference>
<dbReference type="InterPro" id="IPR011650">
    <property type="entry name" value="Peptidase_M20_dimer"/>
</dbReference>
<dbReference type="InterPro" id="IPR010161">
    <property type="entry name" value="Peptidase_M20B"/>
</dbReference>
<dbReference type="NCBIfam" id="TIGR01882">
    <property type="entry name" value="peptidase-T"/>
    <property type="match status" value="1"/>
</dbReference>
<dbReference type="NCBIfam" id="NF003976">
    <property type="entry name" value="PRK05469.1"/>
    <property type="match status" value="1"/>
</dbReference>
<dbReference type="NCBIfam" id="NF009920">
    <property type="entry name" value="PRK13381.1"/>
    <property type="match status" value="1"/>
</dbReference>
<dbReference type="PANTHER" id="PTHR42994">
    <property type="entry name" value="PEPTIDASE T"/>
    <property type="match status" value="1"/>
</dbReference>
<dbReference type="PANTHER" id="PTHR42994:SF1">
    <property type="entry name" value="PEPTIDASE T"/>
    <property type="match status" value="1"/>
</dbReference>
<dbReference type="Pfam" id="PF07687">
    <property type="entry name" value="M20_dimer"/>
    <property type="match status" value="1"/>
</dbReference>
<dbReference type="Pfam" id="PF01546">
    <property type="entry name" value="Peptidase_M20"/>
    <property type="match status" value="1"/>
</dbReference>
<dbReference type="PIRSF" id="PIRSF037215">
    <property type="entry name" value="Peptidase_M20B"/>
    <property type="match status" value="1"/>
</dbReference>
<dbReference type="SUPFAM" id="SSF55031">
    <property type="entry name" value="Bacterial exopeptidase dimerisation domain"/>
    <property type="match status" value="1"/>
</dbReference>
<dbReference type="SUPFAM" id="SSF53187">
    <property type="entry name" value="Zn-dependent exopeptidases"/>
    <property type="match status" value="1"/>
</dbReference>
<dbReference type="PROSITE" id="PS00758">
    <property type="entry name" value="ARGE_DAPE_CPG2_1"/>
    <property type="match status" value="1"/>
</dbReference>
<dbReference type="PROSITE" id="PS00759">
    <property type="entry name" value="ARGE_DAPE_CPG2_2"/>
    <property type="match status" value="1"/>
</dbReference>
<sequence length="406" mass="45217">MKYPTLLDRFLVYVKENTRSDENSTTTPSTQNQVEFAQNILLPEMERIGLQNVHYLPNGFAVGTLPANDPSLTRKIGFIAHMDTADFNAEGVNPQIIENYDGNPIALGTSGYELHPKDFPQLANYHGQILITTDGTTLLGSDDKSGIAEIMTAIEFLIQNPDIKHCEIRVGFGPDEEIGVGADKFDVKDFDVDFAYTMDGGPLGELQYETFSAAGAKIDFLGRNVHPGSAKDQMINAFQMAIDFHNALPETDRPEKTEGYEGFFHLMNMEGSVDTASTTYIIRDFEEEDFQARKQLMLDIAEKMNANFDTPRVIVNLHDQYYNMKKIIEKDMTPINIAKDVMENLGIKPLIEPVRGGTDGSKISFMGIPTPNIFAGGENMHGRFEFVSLETMEKAVDVILGIVAYK</sequence>
<name>PEPT_STRS2</name>
<reference key="1">
    <citation type="journal article" date="2007" name="PLoS ONE">
        <title>A glimpse of streptococcal toxic shock syndrome from comparative genomics of S. suis 2 Chinese isolates.</title>
        <authorList>
            <person name="Chen C."/>
            <person name="Tang J."/>
            <person name="Dong W."/>
            <person name="Wang C."/>
            <person name="Feng Y."/>
            <person name="Wang J."/>
            <person name="Zheng F."/>
            <person name="Pan X."/>
            <person name="Liu D."/>
            <person name="Li M."/>
            <person name="Song Y."/>
            <person name="Zhu X."/>
            <person name="Sun H."/>
            <person name="Feng T."/>
            <person name="Guo Z."/>
            <person name="Ju A."/>
            <person name="Ge J."/>
            <person name="Dong Y."/>
            <person name="Sun W."/>
            <person name="Jiang Y."/>
            <person name="Wang J."/>
            <person name="Yan J."/>
            <person name="Yang H."/>
            <person name="Wang X."/>
            <person name="Gao G.F."/>
            <person name="Yang R."/>
            <person name="Wang J."/>
            <person name="Yu J."/>
        </authorList>
    </citation>
    <scope>NUCLEOTIDE SEQUENCE [LARGE SCALE GENOMIC DNA]</scope>
    <source>
        <strain>98HAH33</strain>
    </source>
</reference>
<keyword id="KW-0031">Aminopeptidase</keyword>
<keyword id="KW-0963">Cytoplasm</keyword>
<keyword id="KW-0378">Hydrolase</keyword>
<keyword id="KW-0479">Metal-binding</keyword>
<keyword id="KW-0482">Metalloprotease</keyword>
<keyword id="KW-0645">Protease</keyword>
<keyword id="KW-0862">Zinc</keyword>
<gene>
    <name evidence="1" type="primary">pepT</name>
    <name type="ordered locus">SSU98_1140</name>
</gene>
<feature type="chain" id="PRO_1000129057" description="Peptidase T">
    <location>
        <begin position="1"/>
        <end position="406"/>
    </location>
</feature>
<feature type="active site" evidence="1">
    <location>
        <position position="83"/>
    </location>
</feature>
<feature type="active site" description="Proton acceptor" evidence="1">
    <location>
        <position position="176"/>
    </location>
</feature>
<feature type="binding site" evidence="1">
    <location>
        <position position="81"/>
    </location>
    <ligand>
        <name>Zn(2+)</name>
        <dbReference type="ChEBI" id="CHEBI:29105"/>
        <label>1</label>
    </ligand>
</feature>
<feature type="binding site" evidence="1">
    <location>
        <position position="142"/>
    </location>
    <ligand>
        <name>Zn(2+)</name>
        <dbReference type="ChEBI" id="CHEBI:29105"/>
        <label>1</label>
    </ligand>
</feature>
<feature type="binding site" evidence="1">
    <location>
        <position position="142"/>
    </location>
    <ligand>
        <name>Zn(2+)</name>
        <dbReference type="ChEBI" id="CHEBI:29105"/>
        <label>2</label>
    </ligand>
</feature>
<feature type="binding site" evidence="1">
    <location>
        <position position="177"/>
    </location>
    <ligand>
        <name>Zn(2+)</name>
        <dbReference type="ChEBI" id="CHEBI:29105"/>
        <label>2</label>
    </ligand>
</feature>
<feature type="binding site" evidence="1">
    <location>
        <position position="199"/>
    </location>
    <ligand>
        <name>Zn(2+)</name>
        <dbReference type="ChEBI" id="CHEBI:29105"/>
        <label>1</label>
    </ligand>
</feature>
<feature type="binding site" evidence="1">
    <location>
        <position position="381"/>
    </location>
    <ligand>
        <name>Zn(2+)</name>
        <dbReference type="ChEBI" id="CHEBI:29105"/>
        <label>2</label>
    </ligand>
</feature>
<accession>A4W1Q9</accession>